<protein>
    <recommendedName>
        <fullName evidence="2">tRNA (guanine-N(7)-)-methyltransferase</fullName>
        <ecNumber evidence="2">2.1.1.33</ecNumber>
    </recommendedName>
    <alternativeName>
        <fullName evidence="2">tRNA (guanine(46)-N(7))-methyltransferase</fullName>
    </alternativeName>
    <alternativeName>
        <fullName evidence="2">tRNA(m7G46)-methyltransferase</fullName>
    </alternativeName>
</protein>
<accession>Q3YXE7</accession>
<comment type="function">
    <text evidence="2">Catalyzes the formation of N(7)-methylguanine at position 46 (m7G46) in tRNA.</text>
</comment>
<comment type="catalytic activity">
    <reaction evidence="2">
        <text>guanosine(46) in tRNA + S-adenosyl-L-methionine = N(7)-methylguanosine(46) in tRNA + S-adenosyl-L-homocysteine</text>
        <dbReference type="Rhea" id="RHEA:42708"/>
        <dbReference type="Rhea" id="RHEA-COMP:10188"/>
        <dbReference type="Rhea" id="RHEA-COMP:10189"/>
        <dbReference type="ChEBI" id="CHEBI:57856"/>
        <dbReference type="ChEBI" id="CHEBI:59789"/>
        <dbReference type="ChEBI" id="CHEBI:74269"/>
        <dbReference type="ChEBI" id="CHEBI:74480"/>
        <dbReference type="EC" id="2.1.1.33"/>
    </reaction>
</comment>
<comment type="pathway">
    <text evidence="2">tRNA modification; N(7)-methylguanine-tRNA biosynthesis.</text>
</comment>
<comment type="subunit">
    <text evidence="2">Monomer.</text>
</comment>
<comment type="similarity">
    <text evidence="2">Belongs to the class I-like SAM-binding methyltransferase superfamily. TrmB family.</text>
</comment>
<reference key="1">
    <citation type="journal article" date="2005" name="Nucleic Acids Res.">
        <title>Genome dynamics and diversity of Shigella species, the etiologic agents of bacillary dysentery.</title>
        <authorList>
            <person name="Yang F."/>
            <person name="Yang J."/>
            <person name="Zhang X."/>
            <person name="Chen L."/>
            <person name="Jiang Y."/>
            <person name="Yan Y."/>
            <person name="Tang X."/>
            <person name="Wang J."/>
            <person name="Xiong Z."/>
            <person name="Dong J."/>
            <person name="Xue Y."/>
            <person name="Zhu Y."/>
            <person name="Xu X."/>
            <person name="Sun L."/>
            <person name="Chen S."/>
            <person name="Nie H."/>
            <person name="Peng J."/>
            <person name="Xu J."/>
            <person name="Wang Y."/>
            <person name="Yuan Z."/>
            <person name="Wen Y."/>
            <person name="Yao Z."/>
            <person name="Shen Y."/>
            <person name="Qiang B."/>
            <person name="Hou Y."/>
            <person name="Yu J."/>
            <person name="Jin Q."/>
        </authorList>
    </citation>
    <scope>NUCLEOTIDE SEQUENCE [LARGE SCALE GENOMIC DNA]</scope>
    <source>
        <strain>Ss046</strain>
    </source>
</reference>
<evidence type="ECO:0000250" key="1"/>
<evidence type="ECO:0000255" key="2">
    <source>
        <dbReference type="HAMAP-Rule" id="MF_01057"/>
    </source>
</evidence>
<keyword id="KW-0489">Methyltransferase</keyword>
<keyword id="KW-1185">Reference proteome</keyword>
<keyword id="KW-0949">S-adenosyl-L-methionine</keyword>
<keyword id="KW-0808">Transferase</keyword>
<keyword id="KW-0819">tRNA processing</keyword>
<proteinExistence type="inferred from homology"/>
<sequence>MKNDVISPEFDENGRPLRRIRSFVRRQGRLTKGQEHALENYWPVMGVEFSEDMLDFPALFGREAPVTLEIGFGMGASLVAMAKDRPEQDFLGIEVHSPGVGACLASAHEEGLSNLRVMCHDAVEVLHKMIPDNSLRMVQLFFPDPWHKARHNKRRIVQVPFAELVKSKLQLGGVFHMATDWEPYAEHMLEVMSSIDGYKNLSESNDYVPRPASRPVTKFEQRGHRLGHGVWDLMFERVK</sequence>
<gene>
    <name evidence="2" type="primary">trmB</name>
    <name type="ordered locus">SSON_3236</name>
</gene>
<name>TRMB_SHISS</name>
<dbReference type="EC" id="2.1.1.33" evidence="2"/>
<dbReference type="EMBL" id="CP000038">
    <property type="protein sequence ID" value="AAZ89815.1"/>
    <property type="molecule type" value="Genomic_DNA"/>
</dbReference>
<dbReference type="RefSeq" id="WP_000786911.1">
    <property type="nucleotide sequence ID" value="NC_007384.1"/>
</dbReference>
<dbReference type="SMR" id="Q3YXE7"/>
<dbReference type="GeneID" id="93779031"/>
<dbReference type="KEGG" id="ssn:SSON_3236"/>
<dbReference type="HOGENOM" id="CLU_050910_0_1_6"/>
<dbReference type="UniPathway" id="UPA00989"/>
<dbReference type="Proteomes" id="UP000002529">
    <property type="component" value="Chromosome"/>
</dbReference>
<dbReference type="GO" id="GO:0043527">
    <property type="term" value="C:tRNA methyltransferase complex"/>
    <property type="evidence" value="ECO:0007669"/>
    <property type="project" value="TreeGrafter"/>
</dbReference>
<dbReference type="GO" id="GO:0008176">
    <property type="term" value="F:tRNA (guanine(46)-N7)-methyltransferase activity"/>
    <property type="evidence" value="ECO:0007669"/>
    <property type="project" value="UniProtKB-UniRule"/>
</dbReference>
<dbReference type="FunFam" id="3.40.50.150:FF:000024">
    <property type="entry name" value="tRNA (guanine-N(7)-)-methyltransferase"/>
    <property type="match status" value="1"/>
</dbReference>
<dbReference type="Gene3D" id="3.40.50.150">
    <property type="entry name" value="Vaccinia Virus protein VP39"/>
    <property type="match status" value="1"/>
</dbReference>
<dbReference type="HAMAP" id="MF_01057">
    <property type="entry name" value="tRNA_methyltr_TrmB"/>
    <property type="match status" value="1"/>
</dbReference>
<dbReference type="InterPro" id="IPR029063">
    <property type="entry name" value="SAM-dependent_MTases_sf"/>
</dbReference>
<dbReference type="InterPro" id="IPR003358">
    <property type="entry name" value="tRNA_(Gua-N-7)_MeTrfase_Trmb"/>
</dbReference>
<dbReference type="InterPro" id="IPR055361">
    <property type="entry name" value="tRNA_methyltr_TrmB_bact"/>
</dbReference>
<dbReference type="NCBIfam" id="TIGR00091">
    <property type="entry name" value="tRNA (guanosine(46)-N7)-methyltransferase TrmB"/>
    <property type="match status" value="1"/>
</dbReference>
<dbReference type="PANTHER" id="PTHR23417">
    <property type="entry name" value="3-DEOXY-D-MANNO-OCTULOSONIC-ACID TRANSFERASE/TRNA GUANINE-N 7 - -METHYLTRANSFERASE"/>
    <property type="match status" value="1"/>
</dbReference>
<dbReference type="PANTHER" id="PTHR23417:SF14">
    <property type="entry name" value="PENTACOTRIPEPTIDE-REPEAT REGION OF PRORP DOMAIN-CONTAINING PROTEIN"/>
    <property type="match status" value="1"/>
</dbReference>
<dbReference type="Pfam" id="PF02390">
    <property type="entry name" value="Methyltransf_4"/>
    <property type="match status" value="1"/>
</dbReference>
<dbReference type="SUPFAM" id="SSF53335">
    <property type="entry name" value="S-adenosyl-L-methionine-dependent methyltransferases"/>
    <property type="match status" value="1"/>
</dbReference>
<dbReference type="PROSITE" id="PS51625">
    <property type="entry name" value="SAM_MT_TRMB"/>
    <property type="match status" value="1"/>
</dbReference>
<organism>
    <name type="scientific">Shigella sonnei (strain Ss046)</name>
    <dbReference type="NCBI Taxonomy" id="300269"/>
    <lineage>
        <taxon>Bacteria</taxon>
        <taxon>Pseudomonadati</taxon>
        <taxon>Pseudomonadota</taxon>
        <taxon>Gammaproteobacteria</taxon>
        <taxon>Enterobacterales</taxon>
        <taxon>Enterobacteriaceae</taxon>
        <taxon>Shigella</taxon>
    </lineage>
</organism>
<feature type="chain" id="PRO_0000229197" description="tRNA (guanine-N(7)-)-methyltransferase">
    <location>
        <begin position="1"/>
        <end position="239"/>
    </location>
</feature>
<feature type="region of interest" description="Interaction with RNA" evidence="2">
    <location>
        <begin position="150"/>
        <end position="155"/>
    </location>
</feature>
<feature type="active site" evidence="1">
    <location>
        <position position="144"/>
    </location>
</feature>
<feature type="binding site" evidence="2">
    <location>
        <position position="69"/>
    </location>
    <ligand>
        <name>S-adenosyl-L-methionine</name>
        <dbReference type="ChEBI" id="CHEBI:59789"/>
    </ligand>
</feature>
<feature type="binding site" evidence="2">
    <location>
        <position position="94"/>
    </location>
    <ligand>
        <name>S-adenosyl-L-methionine</name>
        <dbReference type="ChEBI" id="CHEBI:59789"/>
    </ligand>
</feature>
<feature type="binding site" evidence="2">
    <location>
        <position position="121"/>
    </location>
    <ligand>
        <name>S-adenosyl-L-methionine</name>
        <dbReference type="ChEBI" id="CHEBI:59789"/>
    </ligand>
</feature>
<feature type="binding site" evidence="2">
    <location>
        <position position="144"/>
    </location>
    <ligand>
        <name>S-adenosyl-L-methionine</name>
        <dbReference type="ChEBI" id="CHEBI:59789"/>
    </ligand>
</feature>
<feature type="binding site" evidence="2">
    <location>
        <position position="148"/>
    </location>
    <ligand>
        <name>substrate</name>
    </ligand>
</feature>
<feature type="binding site" evidence="2">
    <location>
        <position position="180"/>
    </location>
    <ligand>
        <name>substrate</name>
    </ligand>
</feature>
<feature type="binding site" evidence="2">
    <location>
        <begin position="217"/>
        <end position="220"/>
    </location>
    <ligand>
        <name>substrate</name>
    </ligand>
</feature>